<keyword id="KW-0479">Metal-binding</keyword>
<keyword id="KW-0520">NAD</keyword>
<keyword id="KW-0521">NADP</keyword>
<keyword id="KW-0558">Oxidation</keyword>
<keyword id="KW-0560">Oxidoreductase</keyword>
<keyword id="KW-0630">Potassium</keyword>
<reference key="1">
    <citation type="journal article" date="2009" name="J. Bacteriol.">
        <title>Complete genome sequence of Rhodobacter sphaeroides KD131.</title>
        <authorList>
            <person name="Lim S.-K."/>
            <person name="Kim S.J."/>
            <person name="Cha S.H."/>
            <person name="Oh Y.-K."/>
            <person name="Rhee H.-J."/>
            <person name="Kim M.-S."/>
            <person name="Lee J.K."/>
        </authorList>
    </citation>
    <scope>NUCLEOTIDE SEQUENCE [LARGE SCALE GENOMIC DNA]</scope>
    <source>
        <strain>KD131 / KCTC 12085</strain>
    </source>
</reference>
<name>BETB_CERSK</name>
<protein>
    <recommendedName>
        <fullName evidence="1">Betaine aldehyde dehydrogenase</fullName>
        <shortName evidence="1">BADH</shortName>
        <ecNumber evidence="1">1.2.1.8</ecNumber>
    </recommendedName>
</protein>
<dbReference type="EC" id="1.2.1.8" evidence="1"/>
<dbReference type="EMBL" id="CP001150">
    <property type="protein sequence ID" value="ACM00354.1"/>
    <property type="molecule type" value="Genomic_DNA"/>
</dbReference>
<dbReference type="RefSeq" id="WP_012643758.1">
    <property type="nucleotide sequence ID" value="NC_011963.1"/>
</dbReference>
<dbReference type="SMR" id="B9KNS6"/>
<dbReference type="GeneID" id="67445952"/>
<dbReference type="KEGG" id="rsk:RSKD131_0494"/>
<dbReference type="HOGENOM" id="CLU_005391_0_1_5"/>
<dbReference type="UniPathway" id="UPA00529">
    <property type="reaction ID" value="UER00386"/>
</dbReference>
<dbReference type="GO" id="GO:0008802">
    <property type="term" value="F:betaine-aldehyde dehydrogenase (NAD+) activity"/>
    <property type="evidence" value="ECO:0007669"/>
    <property type="project" value="UniProtKB-UniRule"/>
</dbReference>
<dbReference type="GO" id="GO:0046872">
    <property type="term" value="F:metal ion binding"/>
    <property type="evidence" value="ECO:0007669"/>
    <property type="project" value="UniProtKB-KW"/>
</dbReference>
<dbReference type="GO" id="GO:0019285">
    <property type="term" value="P:glycine betaine biosynthetic process from choline"/>
    <property type="evidence" value="ECO:0007669"/>
    <property type="project" value="UniProtKB-UniRule"/>
</dbReference>
<dbReference type="FunFam" id="3.40.309.10:FF:000012">
    <property type="entry name" value="Betaine aldehyde dehydrogenase"/>
    <property type="match status" value="1"/>
</dbReference>
<dbReference type="FunFam" id="3.40.605.10:FF:000007">
    <property type="entry name" value="NAD/NADP-dependent betaine aldehyde dehydrogenase"/>
    <property type="match status" value="1"/>
</dbReference>
<dbReference type="Gene3D" id="3.40.605.10">
    <property type="entry name" value="Aldehyde Dehydrogenase, Chain A, domain 1"/>
    <property type="match status" value="1"/>
</dbReference>
<dbReference type="Gene3D" id="3.40.309.10">
    <property type="entry name" value="Aldehyde Dehydrogenase, Chain A, domain 2"/>
    <property type="match status" value="1"/>
</dbReference>
<dbReference type="HAMAP" id="MF_00804">
    <property type="entry name" value="BADH"/>
    <property type="match status" value="1"/>
</dbReference>
<dbReference type="InterPro" id="IPR016161">
    <property type="entry name" value="Ald_DH/histidinol_DH"/>
</dbReference>
<dbReference type="InterPro" id="IPR016163">
    <property type="entry name" value="Ald_DH_C"/>
</dbReference>
<dbReference type="InterPro" id="IPR016160">
    <property type="entry name" value="Ald_DH_CS_CYS"/>
</dbReference>
<dbReference type="InterPro" id="IPR029510">
    <property type="entry name" value="Ald_DH_CS_GLU"/>
</dbReference>
<dbReference type="InterPro" id="IPR016162">
    <property type="entry name" value="Ald_DH_N"/>
</dbReference>
<dbReference type="InterPro" id="IPR015590">
    <property type="entry name" value="Aldehyde_DH_dom"/>
</dbReference>
<dbReference type="InterPro" id="IPR011264">
    <property type="entry name" value="BADH"/>
</dbReference>
<dbReference type="NCBIfam" id="TIGR01804">
    <property type="entry name" value="BADH"/>
    <property type="match status" value="1"/>
</dbReference>
<dbReference type="NCBIfam" id="NF009725">
    <property type="entry name" value="PRK13252.1"/>
    <property type="match status" value="1"/>
</dbReference>
<dbReference type="PANTHER" id="PTHR11699">
    <property type="entry name" value="ALDEHYDE DEHYDROGENASE-RELATED"/>
    <property type="match status" value="1"/>
</dbReference>
<dbReference type="Pfam" id="PF00171">
    <property type="entry name" value="Aldedh"/>
    <property type="match status" value="1"/>
</dbReference>
<dbReference type="SUPFAM" id="SSF53720">
    <property type="entry name" value="ALDH-like"/>
    <property type="match status" value="1"/>
</dbReference>
<dbReference type="PROSITE" id="PS00070">
    <property type="entry name" value="ALDEHYDE_DEHYDR_CYS"/>
    <property type="match status" value="1"/>
</dbReference>
<dbReference type="PROSITE" id="PS00687">
    <property type="entry name" value="ALDEHYDE_DEHYDR_GLU"/>
    <property type="match status" value="1"/>
</dbReference>
<feature type="chain" id="PRO_1000148558" description="Betaine aldehyde dehydrogenase">
    <location>
        <begin position="1"/>
        <end position="483"/>
    </location>
</feature>
<feature type="active site" description="Charge relay system" evidence="1">
    <location>
        <position position="161"/>
    </location>
</feature>
<feature type="active site" description="Proton acceptor" evidence="1">
    <location>
        <position position="249"/>
    </location>
</feature>
<feature type="active site" description="Nucleophile" evidence="1">
    <location>
        <position position="283"/>
    </location>
</feature>
<feature type="active site" description="Charge relay system" evidence="1">
    <location>
        <position position="457"/>
    </location>
</feature>
<feature type="binding site" evidence="1">
    <location>
        <position position="27"/>
    </location>
    <ligand>
        <name>K(+)</name>
        <dbReference type="ChEBI" id="CHEBI:29103"/>
        <label>1</label>
    </ligand>
</feature>
<feature type="binding site" evidence="1">
    <location>
        <position position="93"/>
    </location>
    <ligand>
        <name>K(+)</name>
        <dbReference type="ChEBI" id="CHEBI:29103"/>
        <label>1</label>
    </ligand>
</feature>
<feature type="binding site" evidence="1">
    <location>
        <begin position="149"/>
        <end position="151"/>
    </location>
    <ligand>
        <name>NAD(+)</name>
        <dbReference type="ChEBI" id="CHEBI:57540"/>
    </ligand>
</feature>
<feature type="binding site" evidence="1">
    <location>
        <begin position="175"/>
        <end position="178"/>
    </location>
    <ligand>
        <name>NAD(+)</name>
        <dbReference type="ChEBI" id="CHEBI:57540"/>
    </ligand>
</feature>
<feature type="binding site" evidence="1">
    <location>
        <position position="179"/>
    </location>
    <ligand>
        <name>K(+)</name>
        <dbReference type="ChEBI" id="CHEBI:29103"/>
        <label>1</label>
    </ligand>
</feature>
<feature type="binding site" evidence="1">
    <location>
        <begin position="228"/>
        <end position="231"/>
    </location>
    <ligand>
        <name>NAD(+)</name>
        <dbReference type="ChEBI" id="CHEBI:57540"/>
    </ligand>
</feature>
<feature type="binding site" evidence="1">
    <location>
        <position position="243"/>
    </location>
    <ligand>
        <name>K(+)</name>
        <dbReference type="ChEBI" id="CHEBI:29103"/>
        <label>2</label>
    </ligand>
</feature>
<feature type="binding site" evidence="1">
    <location>
        <position position="251"/>
    </location>
    <ligand>
        <name>NAD(+)</name>
        <dbReference type="ChEBI" id="CHEBI:57540"/>
    </ligand>
</feature>
<feature type="binding site" description="covalent" evidence="1">
    <location>
        <position position="283"/>
    </location>
    <ligand>
        <name>NAD(+)</name>
        <dbReference type="ChEBI" id="CHEBI:57540"/>
    </ligand>
</feature>
<feature type="binding site" evidence="1">
    <location>
        <position position="380"/>
    </location>
    <ligand>
        <name>NAD(+)</name>
        <dbReference type="ChEBI" id="CHEBI:57540"/>
    </ligand>
</feature>
<feature type="binding site" evidence="1">
    <location>
        <position position="450"/>
    </location>
    <ligand>
        <name>K(+)</name>
        <dbReference type="ChEBI" id="CHEBI:29103"/>
        <label>2</label>
    </ligand>
</feature>
<feature type="binding site" evidence="1">
    <location>
        <position position="453"/>
    </location>
    <ligand>
        <name>K(+)</name>
        <dbReference type="ChEBI" id="CHEBI:29103"/>
        <label>2</label>
    </ligand>
</feature>
<feature type="modified residue" description="Cysteine sulfenic acid (-SOH)" evidence="1">
    <location>
        <position position="283"/>
    </location>
</feature>
<comment type="function">
    <text evidence="1">Involved in the biosynthesis of the osmoprotectant glycine betaine. Catalyzes the irreversible oxidation of betaine aldehyde to the corresponding acid.</text>
</comment>
<comment type="catalytic activity">
    <reaction evidence="1">
        <text>betaine aldehyde + NAD(+) + H2O = glycine betaine + NADH + 2 H(+)</text>
        <dbReference type="Rhea" id="RHEA:15305"/>
        <dbReference type="ChEBI" id="CHEBI:15377"/>
        <dbReference type="ChEBI" id="CHEBI:15378"/>
        <dbReference type="ChEBI" id="CHEBI:15710"/>
        <dbReference type="ChEBI" id="CHEBI:17750"/>
        <dbReference type="ChEBI" id="CHEBI:57540"/>
        <dbReference type="ChEBI" id="CHEBI:57945"/>
        <dbReference type="EC" id="1.2.1.8"/>
    </reaction>
    <physiologicalReaction direction="left-to-right" evidence="1">
        <dbReference type="Rhea" id="RHEA:15306"/>
    </physiologicalReaction>
</comment>
<comment type="cofactor">
    <cofactor evidence="1">
        <name>K(+)</name>
        <dbReference type="ChEBI" id="CHEBI:29103"/>
    </cofactor>
    <text evidence="1">Binds 2 potassium ions per subunit.</text>
</comment>
<comment type="pathway">
    <text evidence="1">Amine and polyamine biosynthesis; betaine biosynthesis via choline pathway; betaine from betaine aldehyde: step 1/1.</text>
</comment>
<comment type="subunit">
    <text evidence="1">Dimer of dimers.</text>
</comment>
<comment type="similarity">
    <text evidence="1">Belongs to the aldehyde dehydrogenase family.</text>
</comment>
<gene>
    <name evidence="1" type="primary">betB</name>
    <name type="ordered locus">RSKD131_0494</name>
</gene>
<organism>
    <name type="scientific">Cereibacter sphaeroides (strain KD131 / KCTC 12085)</name>
    <name type="common">Rhodobacter sphaeroides</name>
    <dbReference type="NCBI Taxonomy" id="557760"/>
    <lineage>
        <taxon>Bacteria</taxon>
        <taxon>Pseudomonadati</taxon>
        <taxon>Pseudomonadota</taxon>
        <taxon>Alphaproteobacteria</taxon>
        <taxon>Rhodobacterales</taxon>
        <taxon>Paracoccaceae</taxon>
        <taxon>Cereibacter</taxon>
    </lineage>
</organism>
<proteinExistence type="inferred from homology"/>
<evidence type="ECO:0000255" key="1">
    <source>
        <dbReference type="HAMAP-Rule" id="MF_00804"/>
    </source>
</evidence>
<accession>B9KNS6</accession>
<sequence>MRAQPAASHFVDGRPLEDETGAPIPVIYPATGEEIARLHEATPAVIEAALASGARAQAAWAAMRPVERARILRRASDLIRARNEELSLLETLDTGKPLQETLVADWASGADALEFFAGLAPAVTGETVPLGQDFVYTIREPLGLCVGIGAWNYPSQIACWKAAPALALGNAMVFKPSEVTPLGALKLAEILIEAGLPPGLFNVVQGRGGVGAALVTDSRVAKVSLTGSVPTGRRVYAAAAEGVRHVTMELGGKSPLIVFDDADLESAIGAAMLGNFYSAGQICSNGTRVFVQKGIKEAFLARLAERADAIRMGDPLDPEVQMGPLVSQAQLEKVLAYIEKARAEGGRLVCGGEASVSPGCYVQPTVFADVTDAMTLACEEVFGPVMAVLDFETEEEAIARANATDFGLAAGVFTADLTRAHRVVAQLQAGTCWINAYNLTPVEAPFGGVKLSGVGRENGRAAVEHYTQVKSVYVGMGPVDAPY</sequence>